<protein>
    <recommendedName>
        <fullName>Beta-actin-like protein 2</fullName>
    </recommendedName>
    <alternativeName>
        <fullName>Kappa-actin</fullName>
    </alternativeName>
</protein>
<comment type="function">
    <text evidence="1">Actins are highly conserved proteins that are involved in various types of cell motility and are ubiquitously expressed in all eukaryotic cells.</text>
</comment>
<comment type="subunit">
    <text evidence="1">Polymerization of globular actin (G-actin) leads to a structural filament (F-actin) in the form of a two-stranded helix. Each actin can bind to 4 others (By similarity). Interacts with PFN1 and PFDN1 (By similarity).</text>
</comment>
<comment type="subcellular location">
    <subcellularLocation>
        <location evidence="1">Cytoplasm</location>
        <location evidence="1">Cytoskeleton</location>
    </subcellularLocation>
</comment>
<comment type="PTM">
    <text evidence="2">Oxidation of Met-45 and Met-48 by MICALs (MICAL1, MICAL2 or MICAL3) to form methionine sulfoxide promotes actin filament depolymerization. MICAL1 and MICAL2 produce the (R)-S-oxide form. The (R)-S-oxide form is reverted by MSRB1 and MSRB2, which promote actin repolymerization.</text>
</comment>
<comment type="PTM">
    <text evidence="1">Monomethylation at Lys-85 (K84me1) regulates actin-myosin interaction and actomyosin-dependent processes. Demethylation by ALKBH4 is required for maintaining actomyosin dynamics supporting normal cleavage furrow ingression during cytokinesis and cell migration (By similarity).</text>
</comment>
<comment type="miscellaneous">
    <text>In vertebrates 3 main groups of actin isoforms, alpha, beta and gamma have been identified. The alpha actins are found in muscle tissues and are a major constituent of the contractile apparatus. The beta and gamma actins coexist in most cell types as components of the cytoskeleton and as mediators of internal cell motility.</text>
</comment>
<comment type="similarity">
    <text evidence="3">Belongs to the actin family.</text>
</comment>
<proteinExistence type="evidence at protein level"/>
<accession>Q8BFZ3</accession>
<feature type="chain" id="PRO_0000318850" description="Beta-actin-like protein 2">
    <location>
        <begin position="1"/>
        <end position="376"/>
    </location>
</feature>
<feature type="modified residue" description="Methionine (R)-sulfoxide" evidence="2">
    <location>
        <position position="45"/>
    </location>
</feature>
<feature type="modified residue" description="Methionine (R)-sulfoxide" evidence="2">
    <location>
        <position position="48"/>
    </location>
</feature>
<dbReference type="EMBL" id="AK029110">
    <property type="protein sequence ID" value="BAC26303.1"/>
    <property type="molecule type" value="mRNA"/>
</dbReference>
<dbReference type="EMBL" id="AK029130">
    <property type="protein sequence ID" value="BAC26313.1"/>
    <property type="molecule type" value="mRNA"/>
</dbReference>
<dbReference type="EMBL" id="BC111904">
    <property type="protein sequence ID" value="AAI11905.1"/>
    <property type="molecule type" value="mRNA"/>
</dbReference>
<dbReference type="EMBL" id="BC112429">
    <property type="protein sequence ID" value="AAI12430.1"/>
    <property type="molecule type" value="mRNA"/>
</dbReference>
<dbReference type="CCDS" id="CCDS26768.1"/>
<dbReference type="RefSeq" id="NP_780706.1">
    <property type="nucleotide sequence ID" value="NM_175497.3"/>
</dbReference>
<dbReference type="SMR" id="Q8BFZ3"/>
<dbReference type="BioGRID" id="232025">
    <property type="interactions" value="17"/>
</dbReference>
<dbReference type="FunCoup" id="Q8BFZ3">
    <property type="interactions" value="320"/>
</dbReference>
<dbReference type="IntAct" id="Q8BFZ3">
    <property type="interactions" value="7"/>
</dbReference>
<dbReference type="MINT" id="Q8BFZ3"/>
<dbReference type="STRING" id="10090.ENSMUSP00000052086"/>
<dbReference type="GlyGen" id="Q8BFZ3">
    <property type="glycosylation" value="4 sites, 2 N-linked glycans (2 sites), 1 O-linked glycan (2 sites)"/>
</dbReference>
<dbReference type="iPTMnet" id="Q8BFZ3"/>
<dbReference type="PhosphoSitePlus" id="Q8BFZ3"/>
<dbReference type="SwissPalm" id="Q8BFZ3"/>
<dbReference type="jPOST" id="Q8BFZ3"/>
<dbReference type="PaxDb" id="10090-ENSMUSP00000052086"/>
<dbReference type="PeptideAtlas" id="Q8BFZ3"/>
<dbReference type="ProteomicsDB" id="285750"/>
<dbReference type="Pumba" id="Q8BFZ3"/>
<dbReference type="Antibodypedia" id="56201">
    <property type="antibodies" value="69 antibodies from 18 providers"/>
</dbReference>
<dbReference type="DNASU" id="238880"/>
<dbReference type="Ensembl" id="ENSMUST00000054716.4">
    <property type="protein sequence ID" value="ENSMUSP00000052086.4"/>
    <property type="gene ID" value="ENSMUSG00000055194.4"/>
</dbReference>
<dbReference type="GeneID" id="238880"/>
<dbReference type="KEGG" id="mmu:238880"/>
<dbReference type="UCSC" id="uc007rvu.1">
    <property type="organism name" value="mouse"/>
</dbReference>
<dbReference type="AGR" id="MGI:2444552"/>
<dbReference type="CTD" id="345651"/>
<dbReference type="MGI" id="MGI:2444552">
    <property type="gene designation" value="Actbl2"/>
</dbReference>
<dbReference type="VEuPathDB" id="HostDB:ENSMUSG00000055194"/>
<dbReference type="eggNOG" id="KOG0676">
    <property type="taxonomic scope" value="Eukaryota"/>
</dbReference>
<dbReference type="GeneTree" id="ENSGT00940000162627"/>
<dbReference type="HOGENOM" id="CLU_027965_0_2_1"/>
<dbReference type="InParanoid" id="Q8BFZ3"/>
<dbReference type="OMA" id="EQEMVGA"/>
<dbReference type="OrthoDB" id="5132116at2759"/>
<dbReference type="PhylomeDB" id="Q8BFZ3"/>
<dbReference type="TreeFam" id="TF354237"/>
<dbReference type="BioGRID-ORCS" id="238880">
    <property type="hits" value="1 hit in 78 CRISPR screens"/>
</dbReference>
<dbReference type="PRO" id="PR:Q8BFZ3"/>
<dbReference type="Proteomes" id="UP000000589">
    <property type="component" value="Chromosome 13"/>
</dbReference>
<dbReference type="RNAct" id="Q8BFZ3">
    <property type="molecule type" value="protein"/>
</dbReference>
<dbReference type="Bgee" id="ENSMUSG00000055194">
    <property type="expression patterns" value="Expressed in lip and 3 other cell types or tissues"/>
</dbReference>
<dbReference type="GO" id="GO:0005737">
    <property type="term" value="C:cytoplasm"/>
    <property type="evidence" value="ECO:0007669"/>
    <property type="project" value="UniProtKB-KW"/>
</dbReference>
<dbReference type="GO" id="GO:0005856">
    <property type="term" value="C:cytoskeleton"/>
    <property type="evidence" value="ECO:0007669"/>
    <property type="project" value="UniProtKB-SubCell"/>
</dbReference>
<dbReference type="GO" id="GO:0098978">
    <property type="term" value="C:glutamatergic synapse"/>
    <property type="evidence" value="ECO:0000314"/>
    <property type="project" value="SynGO"/>
</dbReference>
<dbReference type="GO" id="GO:0045202">
    <property type="term" value="C:synapse"/>
    <property type="evidence" value="ECO:0000314"/>
    <property type="project" value="SynGO"/>
</dbReference>
<dbReference type="GO" id="GO:0005524">
    <property type="term" value="F:ATP binding"/>
    <property type="evidence" value="ECO:0007669"/>
    <property type="project" value="UniProtKB-KW"/>
</dbReference>
<dbReference type="CDD" id="cd10224">
    <property type="entry name" value="ASKHA_NBD_actin"/>
    <property type="match status" value="1"/>
</dbReference>
<dbReference type="FunFam" id="2.30.36.70:FF:000001">
    <property type="entry name" value="Actin, alpha skeletal muscle"/>
    <property type="match status" value="1"/>
</dbReference>
<dbReference type="FunFam" id="3.30.420.40:FF:000131">
    <property type="entry name" value="Actin, alpha skeletal muscle"/>
    <property type="match status" value="1"/>
</dbReference>
<dbReference type="FunFam" id="3.30.420.40:FF:000291">
    <property type="entry name" value="Actin, alpha skeletal muscle"/>
    <property type="match status" value="1"/>
</dbReference>
<dbReference type="FunFam" id="3.90.640.10:FF:000047">
    <property type="entry name" value="Actin, alpha skeletal muscle"/>
    <property type="match status" value="1"/>
</dbReference>
<dbReference type="FunFam" id="3.30.420.40:FF:000058">
    <property type="entry name" value="Putative actin-related protein 5"/>
    <property type="match status" value="1"/>
</dbReference>
<dbReference type="Gene3D" id="3.30.420.40">
    <property type="match status" value="2"/>
</dbReference>
<dbReference type="Gene3D" id="3.90.640.10">
    <property type="entry name" value="Actin, Chain A, domain 4"/>
    <property type="match status" value="1"/>
</dbReference>
<dbReference type="InterPro" id="IPR004000">
    <property type="entry name" value="Actin"/>
</dbReference>
<dbReference type="InterPro" id="IPR020902">
    <property type="entry name" value="Actin/actin-like_CS"/>
</dbReference>
<dbReference type="InterPro" id="IPR004001">
    <property type="entry name" value="Actin_CS"/>
</dbReference>
<dbReference type="InterPro" id="IPR043129">
    <property type="entry name" value="ATPase_NBD"/>
</dbReference>
<dbReference type="PANTHER" id="PTHR11937">
    <property type="entry name" value="ACTIN"/>
    <property type="match status" value="1"/>
</dbReference>
<dbReference type="Pfam" id="PF00022">
    <property type="entry name" value="Actin"/>
    <property type="match status" value="1"/>
</dbReference>
<dbReference type="PRINTS" id="PR00190">
    <property type="entry name" value="ACTIN"/>
</dbReference>
<dbReference type="SMART" id="SM00268">
    <property type="entry name" value="ACTIN"/>
    <property type="match status" value="1"/>
</dbReference>
<dbReference type="SUPFAM" id="SSF53067">
    <property type="entry name" value="Actin-like ATPase domain"/>
    <property type="match status" value="2"/>
</dbReference>
<dbReference type="PROSITE" id="PS00406">
    <property type="entry name" value="ACTINS_1"/>
    <property type="match status" value="1"/>
</dbReference>
<dbReference type="PROSITE" id="PS00432">
    <property type="entry name" value="ACTINS_2"/>
    <property type="match status" value="1"/>
</dbReference>
<dbReference type="PROSITE" id="PS01132">
    <property type="entry name" value="ACTINS_ACT_LIKE"/>
    <property type="match status" value="1"/>
</dbReference>
<evidence type="ECO:0000250" key="1"/>
<evidence type="ECO:0000269" key="2">
    <source>
    </source>
</evidence>
<evidence type="ECO:0000305" key="3"/>
<gene>
    <name type="primary">Actbl2</name>
</gene>
<keyword id="KW-0067">ATP-binding</keyword>
<keyword id="KW-0963">Cytoplasm</keyword>
<keyword id="KW-0206">Cytoskeleton</keyword>
<keyword id="KW-0547">Nucleotide-binding</keyword>
<keyword id="KW-0558">Oxidation</keyword>
<keyword id="KW-1185">Reference proteome</keyword>
<organism>
    <name type="scientific">Mus musculus</name>
    <name type="common">Mouse</name>
    <dbReference type="NCBI Taxonomy" id="10090"/>
    <lineage>
        <taxon>Eukaryota</taxon>
        <taxon>Metazoa</taxon>
        <taxon>Chordata</taxon>
        <taxon>Craniata</taxon>
        <taxon>Vertebrata</taxon>
        <taxon>Euteleostomi</taxon>
        <taxon>Mammalia</taxon>
        <taxon>Eutheria</taxon>
        <taxon>Euarchontoglires</taxon>
        <taxon>Glires</taxon>
        <taxon>Rodentia</taxon>
        <taxon>Myomorpha</taxon>
        <taxon>Muroidea</taxon>
        <taxon>Muridae</taxon>
        <taxon>Murinae</taxon>
        <taxon>Mus</taxon>
        <taxon>Mus</taxon>
    </lineage>
</organism>
<reference key="1">
    <citation type="journal article" date="2005" name="Science">
        <title>The transcriptional landscape of the mammalian genome.</title>
        <authorList>
            <person name="Carninci P."/>
            <person name="Kasukawa T."/>
            <person name="Katayama S."/>
            <person name="Gough J."/>
            <person name="Frith M.C."/>
            <person name="Maeda N."/>
            <person name="Oyama R."/>
            <person name="Ravasi T."/>
            <person name="Lenhard B."/>
            <person name="Wells C."/>
            <person name="Kodzius R."/>
            <person name="Shimokawa K."/>
            <person name="Bajic V.B."/>
            <person name="Brenner S.E."/>
            <person name="Batalov S."/>
            <person name="Forrest A.R."/>
            <person name="Zavolan M."/>
            <person name="Davis M.J."/>
            <person name="Wilming L.G."/>
            <person name="Aidinis V."/>
            <person name="Allen J.E."/>
            <person name="Ambesi-Impiombato A."/>
            <person name="Apweiler R."/>
            <person name="Aturaliya R.N."/>
            <person name="Bailey T.L."/>
            <person name="Bansal M."/>
            <person name="Baxter L."/>
            <person name="Beisel K.W."/>
            <person name="Bersano T."/>
            <person name="Bono H."/>
            <person name="Chalk A.M."/>
            <person name="Chiu K.P."/>
            <person name="Choudhary V."/>
            <person name="Christoffels A."/>
            <person name="Clutterbuck D.R."/>
            <person name="Crowe M.L."/>
            <person name="Dalla E."/>
            <person name="Dalrymple B.P."/>
            <person name="de Bono B."/>
            <person name="Della Gatta G."/>
            <person name="di Bernardo D."/>
            <person name="Down T."/>
            <person name="Engstrom P."/>
            <person name="Fagiolini M."/>
            <person name="Faulkner G."/>
            <person name="Fletcher C.F."/>
            <person name="Fukushima T."/>
            <person name="Furuno M."/>
            <person name="Futaki S."/>
            <person name="Gariboldi M."/>
            <person name="Georgii-Hemming P."/>
            <person name="Gingeras T.R."/>
            <person name="Gojobori T."/>
            <person name="Green R.E."/>
            <person name="Gustincich S."/>
            <person name="Harbers M."/>
            <person name="Hayashi Y."/>
            <person name="Hensch T.K."/>
            <person name="Hirokawa N."/>
            <person name="Hill D."/>
            <person name="Huminiecki L."/>
            <person name="Iacono M."/>
            <person name="Ikeo K."/>
            <person name="Iwama A."/>
            <person name="Ishikawa T."/>
            <person name="Jakt M."/>
            <person name="Kanapin A."/>
            <person name="Katoh M."/>
            <person name="Kawasawa Y."/>
            <person name="Kelso J."/>
            <person name="Kitamura H."/>
            <person name="Kitano H."/>
            <person name="Kollias G."/>
            <person name="Krishnan S.P."/>
            <person name="Kruger A."/>
            <person name="Kummerfeld S.K."/>
            <person name="Kurochkin I.V."/>
            <person name="Lareau L.F."/>
            <person name="Lazarevic D."/>
            <person name="Lipovich L."/>
            <person name="Liu J."/>
            <person name="Liuni S."/>
            <person name="McWilliam S."/>
            <person name="Madan Babu M."/>
            <person name="Madera M."/>
            <person name="Marchionni L."/>
            <person name="Matsuda H."/>
            <person name="Matsuzawa S."/>
            <person name="Miki H."/>
            <person name="Mignone F."/>
            <person name="Miyake S."/>
            <person name="Morris K."/>
            <person name="Mottagui-Tabar S."/>
            <person name="Mulder N."/>
            <person name="Nakano N."/>
            <person name="Nakauchi H."/>
            <person name="Ng P."/>
            <person name="Nilsson R."/>
            <person name="Nishiguchi S."/>
            <person name="Nishikawa S."/>
            <person name="Nori F."/>
            <person name="Ohara O."/>
            <person name="Okazaki Y."/>
            <person name="Orlando V."/>
            <person name="Pang K.C."/>
            <person name="Pavan W.J."/>
            <person name="Pavesi G."/>
            <person name="Pesole G."/>
            <person name="Petrovsky N."/>
            <person name="Piazza S."/>
            <person name="Reed J."/>
            <person name="Reid J.F."/>
            <person name="Ring B.Z."/>
            <person name="Ringwald M."/>
            <person name="Rost B."/>
            <person name="Ruan Y."/>
            <person name="Salzberg S.L."/>
            <person name="Sandelin A."/>
            <person name="Schneider C."/>
            <person name="Schoenbach C."/>
            <person name="Sekiguchi K."/>
            <person name="Semple C.A."/>
            <person name="Seno S."/>
            <person name="Sessa L."/>
            <person name="Sheng Y."/>
            <person name="Shibata Y."/>
            <person name="Shimada H."/>
            <person name="Shimada K."/>
            <person name="Silva D."/>
            <person name="Sinclair B."/>
            <person name="Sperling S."/>
            <person name="Stupka E."/>
            <person name="Sugiura K."/>
            <person name="Sultana R."/>
            <person name="Takenaka Y."/>
            <person name="Taki K."/>
            <person name="Tammoja K."/>
            <person name="Tan S.L."/>
            <person name="Tang S."/>
            <person name="Taylor M.S."/>
            <person name="Tegner J."/>
            <person name="Teichmann S.A."/>
            <person name="Ueda H.R."/>
            <person name="van Nimwegen E."/>
            <person name="Verardo R."/>
            <person name="Wei C.L."/>
            <person name="Yagi K."/>
            <person name="Yamanishi H."/>
            <person name="Zabarovsky E."/>
            <person name="Zhu S."/>
            <person name="Zimmer A."/>
            <person name="Hide W."/>
            <person name="Bult C."/>
            <person name="Grimmond S.M."/>
            <person name="Teasdale R.D."/>
            <person name="Liu E.T."/>
            <person name="Brusic V."/>
            <person name="Quackenbush J."/>
            <person name="Wahlestedt C."/>
            <person name="Mattick J.S."/>
            <person name="Hume D.A."/>
            <person name="Kai C."/>
            <person name="Sasaki D."/>
            <person name="Tomaru Y."/>
            <person name="Fukuda S."/>
            <person name="Kanamori-Katayama M."/>
            <person name="Suzuki M."/>
            <person name="Aoki J."/>
            <person name="Arakawa T."/>
            <person name="Iida J."/>
            <person name="Imamura K."/>
            <person name="Itoh M."/>
            <person name="Kato T."/>
            <person name="Kawaji H."/>
            <person name="Kawagashira N."/>
            <person name="Kawashima T."/>
            <person name="Kojima M."/>
            <person name="Kondo S."/>
            <person name="Konno H."/>
            <person name="Nakano K."/>
            <person name="Ninomiya N."/>
            <person name="Nishio T."/>
            <person name="Okada M."/>
            <person name="Plessy C."/>
            <person name="Shibata K."/>
            <person name="Shiraki T."/>
            <person name="Suzuki S."/>
            <person name="Tagami M."/>
            <person name="Waki K."/>
            <person name="Watahiki A."/>
            <person name="Okamura-Oho Y."/>
            <person name="Suzuki H."/>
            <person name="Kawai J."/>
            <person name="Hayashizaki Y."/>
        </authorList>
    </citation>
    <scope>NUCLEOTIDE SEQUENCE [LARGE SCALE MRNA]</scope>
    <source>
        <strain>C57BL/6J</strain>
        <tissue>Skin</tissue>
    </source>
</reference>
<reference key="2">
    <citation type="journal article" date="2004" name="Genome Res.">
        <title>The status, quality, and expansion of the NIH full-length cDNA project: the Mammalian Gene Collection (MGC).</title>
        <authorList>
            <consortium name="The MGC Project Team"/>
        </authorList>
    </citation>
    <scope>NUCLEOTIDE SEQUENCE [LARGE SCALE MRNA]</scope>
</reference>
<reference key="3">
    <citation type="journal article" date="2010" name="Cell">
        <title>A tissue-specific atlas of mouse protein phosphorylation and expression.</title>
        <authorList>
            <person name="Huttlin E.L."/>
            <person name="Jedrychowski M.P."/>
            <person name="Elias J.E."/>
            <person name="Goswami T."/>
            <person name="Rad R."/>
            <person name="Beausoleil S.A."/>
            <person name="Villen J."/>
            <person name="Haas W."/>
            <person name="Sowa M.E."/>
            <person name="Gygi S.P."/>
        </authorList>
    </citation>
    <scope>IDENTIFICATION BY MASS SPECTROMETRY [LARGE SCALE ANALYSIS]</scope>
    <source>
        <tissue>Spleen</tissue>
    </source>
</reference>
<reference key="4">
    <citation type="journal article" date="2013" name="Mol. Cell">
        <title>MsrB1 and MICALs regulate actin assembly and macrophage function via reversible stereoselective methionine oxidation.</title>
        <authorList>
            <person name="Lee B.C."/>
            <person name="Peterfi Z."/>
            <person name="Hoffmann F.W."/>
            <person name="Moore R.E."/>
            <person name="Kaya A."/>
            <person name="Avanesov A."/>
            <person name="Tarrago L."/>
            <person name="Zhou Y."/>
            <person name="Weerapana E."/>
            <person name="Fomenko D.E."/>
            <person name="Hoffmann P.R."/>
            <person name="Gladyshev V.N."/>
        </authorList>
    </citation>
    <scope>OXIDATION AT MET-45 AND MET-48</scope>
    <scope>DEOXIDATION AT MET-45 AND MET-48</scope>
</reference>
<sequence>MVDDELTALVVDNGSGMCKAGFGGDDAPRAVFPSMVGRPRHQGVMVGMGQKDCYVGDEAQSKRGILTLKYPIEHGVVTNWDDMEKIWYHTFYNELRVAPDEHPILLTEAPLNPKINREKMTQIMFEAFNTPAMYVAIQAVLSLYASGRTTGIVMDSGDGVTHTVPIYEGYALPHAILRLDLAGRDLTDYLMKILTERGYNFTTTAEREIVRDVKEKLCYVALDFEQEMVTAAASSSLERSYELPDGQVITIGNERFRCPEAIFQPSFLGIESRGIHETTFNSIMKCDVDIRKDLFANTVLSGGSTMYPGIADRMQKEIVTLAPSTMKIKIIAPPERKYSVWIGGSILASLSTFQQMWISKQEYDEAGPPIVHRKCF</sequence>
<name>ACTBL_MOUSE</name>